<organism>
    <name type="scientific">African swine fever virus (isolate Pig/Kenya/KEN-50/1950)</name>
    <name type="common">ASFV</name>
    <dbReference type="NCBI Taxonomy" id="561445"/>
    <lineage>
        <taxon>Viruses</taxon>
        <taxon>Varidnaviria</taxon>
        <taxon>Bamfordvirae</taxon>
        <taxon>Nucleocytoviricota</taxon>
        <taxon>Pokkesviricetes</taxon>
        <taxon>Asfuvirales</taxon>
        <taxon>Asfarviridae</taxon>
        <taxon>Asfivirus</taxon>
        <taxon>African swine fever virus</taxon>
    </lineage>
</organism>
<proteinExistence type="inferred from homology"/>
<keyword id="KW-0244">Early protein</keyword>
<keyword id="KW-0732">Signal</keyword>
<gene>
    <name type="ordered locus">Ken-008</name>
</gene>
<reference key="1">
    <citation type="submission" date="2003-03" db="EMBL/GenBank/DDBJ databases">
        <title>African swine fever virus genomes.</title>
        <authorList>
            <person name="Kutish G.F."/>
            <person name="Rock D.L."/>
        </authorList>
    </citation>
    <scope>NUCLEOTIDE SEQUENCE [LARGE SCALE GENOMIC DNA]</scope>
</reference>
<organismHost>
    <name type="scientific">Ornithodoros</name>
    <name type="common">relapsing fever ticks</name>
    <dbReference type="NCBI Taxonomy" id="6937"/>
</organismHost>
<organismHost>
    <name type="scientific">Phacochoerus aethiopicus</name>
    <name type="common">Warthog</name>
    <dbReference type="NCBI Taxonomy" id="85517"/>
</organismHost>
<organismHost>
    <name type="scientific">Phacochoerus africanus</name>
    <name type="common">Warthog</name>
    <dbReference type="NCBI Taxonomy" id="41426"/>
</organismHost>
<organismHost>
    <name type="scientific">Potamochoerus larvatus</name>
    <name type="common">Bushpig</name>
    <dbReference type="NCBI Taxonomy" id="273792"/>
</organismHost>
<organismHost>
    <name type="scientific">Sus scrofa</name>
    <name type="common">Pig</name>
    <dbReference type="NCBI Taxonomy" id="9823"/>
</organismHost>
<sequence length="113" mass="13008">MGFFSYLGLVLVGLASLTSLASLANLQDFSTDNPLEEELRCWCQYVKNCRFCWACQDGFCKNKVLKNMPSVQEHSYPMEHCMIHRQCKYVRDGPIFQVECMMQTCDAIHLLNA</sequence>
<dbReference type="EMBL" id="AY261360">
    <property type="status" value="NOT_ANNOTATED_CDS"/>
    <property type="molecule type" value="Genomic_DNA"/>
</dbReference>
<dbReference type="Proteomes" id="UP000000861">
    <property type="component" value="Segment"/>
</dbReference>
<dbReference type="InterPro" id="IPR004848">
    <property type="entry name" value="ASFV_fam_110"/>
</dbReference>
<dbReference type="Pfam" id="PF01639">
    <property type="entry name" value="v110"/>
    <property type="match status" value="1"/>
</dbReference>
<evidence type="ECO:0000250" key="1"/>
<evidence type="ECO:0000250" key="2">
    <source>
        <dbReference type="UniProtKB" id="A9JLI3"/>
    </source>
</evidence>
<evidence type="ECO:0000305" key="3"/>
<comment type="function">
    <text evidence="1">Plays a role in virus cell tropism, and may be required for efficient virus replication in macrophages.</text>
</comment>
<comment type="induction">
    <text evidence="3">Expressed in the early phase of the viral replicative cycle.</text>
</comment>
<comment type="similarity">
    <text evidence="3">Belongs to the asfivirus MGF 110 family.</text>
</comment>
<protein>
    <recommendedName>
        <fullName>Protein MGF 110-2L</fullName>
    </recommendedName>
</protein>
<name>1102L_ASFK5</name>
<accession>P0C9G6</accession>
<feature type="signal peptide" evidence="2">
    <location>
        <begin position="1"/>
        <end position="31"/>
    </location>
</feature>
<feature type="chain" id="PRO_0000373188" description="Protein MGF 110-2L">
    <location>
        <begin position="32"/>
        <end position="113"/>
    </location>
</feature>